<evidence type="ECO:0000255" key="1">
    <source>
        <dbReference type="HAMAP-Rule" id="MF_00294"/>
    </source>
</evidence>
<evidence type="ECO:0000305" key="2"/>
<keyword id="KW-1185">Reference proteome</keyword>
<keyword id="KW-0687">Ribonucleoprotein</keyword>
<keyword id="KW-0689">Ribosomal protein</keyword>
<organism>
    <name type="scientific">Methylococcus capsulatus (strain ATCC 33009 / NCIMB 11132 / Bath)</name>
    <dbReference type="NCBI Taxonomy" id="243233"/>
    <lineage>
        <taxon>Bacteria</taxon>
        <taxon>Pseudomonadati</taxon>
        <taxon>Pseudomonadota</taxon>
        <taxon>Gammaproteobacteria</taxon>
        <taxon>Methylococcales</taxon>
        <taxon>Methylococcaceae</taxon>
        <taxon>Methylococcus</taxon>
    </lineage>
</organism>
<proteinExistence type="inferred from homology"/>
<name>RL33_METCA</name>
<reference key="1">
    <citation type="journal article" date="2004" name="PLoS Biol.">
        <title>Genomic insights into methanotrophy: the complete genome sequence of Methylococcus capsulatus (Bath).</title>
        <authorList>
            <person name="Ward N.L."/>
            <person name="Larsen O."/>
            <person name="Sakwa J."/>
            <person name="Bruseth L."/>
            <person name="Khouri H.M."/>
            <person name="Durkin A.S."/>
            <person name="Dimitrov G."/>
            <person name="Jiang L."/>
            <person name="Scanlan D."/>
            <person name="Kang K.H."/>
            <person name="Lewis M.R."/>
            <person name="Nelson K.E."/>
            <person name="Methe B.A."/>
            <person name="Wu M."/>
            <person name="Heidelberg J.F."/>
            <person name="Paulsen I.T."/>
            <person name="Fouts D.E."/>
            <person name="Ravel J."/>
            <person name="Tettelin H."/>
            <person name="Ren Q."/>
            <person name="Read T.D."/>
            <person name="DeBoy R.T."/>
            <person name="Seshadri R."/>
            <person name="Salzberg S.L."/>
            <person name="Jensen H.B."/>
            <person name="Birkeland N.K."/>
            <person name="Nelson W.C."/>
            <person name="Dodson R.J."/>
            <person name="Grindhaug S.H."/>
            <person name="Holt I.E."/>
            <person name="Eidhammer I."/>
            <person name="Jonasen I."/>
            <person name="Vanaken S."/>
            <person name="Utterback T.R."/>
            <person name="Feldblyum T.V."/>
            <person name="Fraser C.M."/>
            <person name="Lillehaug J.R."/>
            <person name="Eisen J.A."/>
        </authorList>
    </citation>
    <scope>NUCLEOTIDE SEQUENCE [LARGE SCALE GENOMIC DNA]</scope>
    <source>
        <strain>ATCC 33009 / NCIMB 11132 / Bath</strain>
    </source>
</reference>
<sequence length="51" mass="6009">MRDKIKLVSSAGTGHFYTTTKNKRTMPEKMEIKKFDPVVRKHVLYKEAKIK</sequence>
<accession>Q605E4</accession>
<comment type="similarity">
    <text evidence="1">Belongs to the bacterial ribosomal protein bL33 family.</text>
</comment>
<feature type="chain" id="PRO_0000356541" description="Large ribosomal subunit protein bL33">
    <location>
        <begin position="1"/>
        <end position="51"/>
    </location>
</feature>
<gene>
    <name evidence="1" type="primary">rpmG</name>
    <name type="ordered locus">MCA2340</name>
</gene>
<dbReference type="EMBL" id="AE017282">
    <property type="protein sequence ID" value="AAU91507.1"/>
    <property type="molecule type" value="Genomic_DNA"/>
</dbReference>
<dbReference type="RefSeq" id="WP_010961568.1">
    <property type="nucleotide sequence ID" value="NC_002977.6"/>
</dbReference>
<dbReference type="SMR" id="Q605E4"/>
<dbReference type="STRING" id="243233.MCA2340"/>
<dbReference type="GeneID" id="88224544"/>
<dbReference type="KEGG" id="mca:MCA2340"/>
<dbReference type="eggNOG" id="COG0267">
    <property type="taxonomic scope" value="Bacteria"/>
</dbReference>
<dbReference type="HOGENOM" id="CLU_190949_1_1_6"/>
<dbReference type="Proteomes" id="UP000006821">
    <property type="component" value="Chromosome"/>
</dbReference>
<dbReference type="GO" id="GO:0022625">
    <property type="term" value="C:cytosolic large ribosomal subunit"/>
    <property type="evidence" value="ECO:0007669"/>
    <property type="project" value="TreeGrafter"/>
</dbReference>
<dbReference type="GO" id="GO:0003735">
    <property type="term" value="F:structural constituent of ribosome"/>
    <property type="evidence" value="ECO:0007669"/>
    <property type="project" value="InterPro"/>
</dbReference>
<dbReference type="GO" id="GO:0006412">
    <property type="term" value="P:translation"/>
    <property type="evidence" value="ECO:0007669"/>
    <property type="project" value="UniProtKB-UniRule"/>
</dbReference>
<dbReference type="FunFam" id="2.20.28.120:FF:000001">
    <property type="entry name" value="50S ribosomal protein L33"/>
    <property type="match status" value="1"/>
</dbReference>
<dbReference type="Gene3D" id="2.20.28.120">
    <property type="entry name" value="Ribosomal protein L33"/>
    <property type="match status" value="1"/>
</dbReference>
<dbReference type="HAMAP" id="MF_00294">
    <property type="entry name" value="Ribosomal_bL33"/>
    <property type="match status" value="1"/>
</dbReference>
<dbReference type="InterPro" id="IPR001705">
    <property type="entry name" value="Ribosomal_bL33"/>
</dbReference>
<dbReference type="InterPro" id="IPR018264">
    <property type="entry name" value="Ribosomal_bL33_CS"/>
</dbReference>
<dbReference type="InterPro" id="IPR038584">
    <property type="entry name" value="Ribosomal_bL33_sf"/>
</dbReference>
<dbReference type="InterPro" id="IPR011332">
    <property type="entry name" value="Ribosomal_zn-bd"/>
</dbReference>
<dbReference type="NCBIfam" id="NF001860">
    <property type="entry name" value="PRK00595.1"/>
    <property type="match status" value="1"/>
</dbReference>
<dbReference type="NCBIfam" id="TIGR01023">
    <property type="entry name" value="rpmG_bact"/>
    <property type="match status" value="1"/>
</dbReference>
<dbReference type="PANTHER" id="PTHR15238">
    <property type="entry name" value="54S RIBOSOMAL PROTEIN L39, MITOCHONDRIAL"/>
    <property type="match status" value="1"/>
</dbReference>
<dbReference type="PANTHER" id="PTHR15238:SF1">
    <property type="entry name" value="LARGE RIBOSOMAL SUBUNIT PROTEIN BL33M"/>
    <property type="match status" value="1"/>
</dbReference>
<dbReference type="Pfam" id="PF00471">
    <property type="entry name" value="Ribosomal_L33"/>
    <property type="match status" value="1"/>
</dbReference>
<dbReference type="SUPFAM" id="SSF57829">
    <property type="entry name" value="Zn-binding ribosomal proteins"/>
    <property type="match status" value="1"/>
</dbReference>
<dbReference type="PROSITE" id="PS00582">
    <property type="entry name" value="RIBOSOMAL_L33"/>
    <property type="match status" value="1"/>
</dbReference>
<protein>
    <recommendedName>
        <fullName evidence="1">Large ribosomal subunit protein bL33</fullName>
    </recommendedName>
    <alternativeName>
        <fullName evidence="2">50S ribosomal protein L33</fullName>
    </alternativeName>
</protein>